<dbReference type="EC" id="5.4.2.10" evidence="1"/>
<dbReference type="EMBL" id="AP006627">
    <property type="protein sequence ID" value="BAD62786.1"/>
    <property type="molecule type" value="Genomic_DNA"/>
</dbReference>
<dbReference type="RefSeq" id="WP_011245106.1">
    <property type="nucleotide sequence ID" value="NC_006582.1"/>
</dbReference>
<dbReference type="SMR" id="Q5WLG9"/>
<dbReference type="STRING" id="66692.ABC0243"/>
<dbReference type="KEGG" id="bcl:ABC0243"/>
<dbReference type="eggNOG" id="COG1109">
    <property type="taxonomic scope" value="Bacteria"/>
</dbReference>
<dbReference type="HOGENOM" id="CLU_016950_7_0_9"/>
<dbReference type="OrthoDB" id="9806956at2"/>
<dbReference type="Proteomes" id="UP000001168">
    <property type="component" value="Chromosome"/>
</dbReference>
<dbReference type="GO" id="GO:0005829">
    <property type="term" value="C:cytosol"/>
    <property type="evidence" value="ECO:0007669"/>
    <property type="project" value="TreeGrafter"/>
</dbReference>
<dbReference type="GO" id="GO:0000287">
    <property type="term" value="F:magnesium ion binding"/>
    <property type="evidence" value="ECO:0007669"/>
    <property type="project" value="UniProtKB-UniRule"/>
</dbReference>
<dbReference type="GO" id="GO:0008966">
    <property type="term" value="F:phosphoglucosamine mutase activity"/>
    <property type="evidence" value="ECO:0007669"/>
    <property type="project" value="UniProtKB-UniRule"/>
</dbReference>
<dbReference type="GO" id="GO:0004615">
    <property type="term" value="F:phosphomannomutase activity"/>
    <property type="evidence" value="ECO:0007669"/>
    <property type="project" value="TreeGrafter"/>
</dbReference>
<dbReference type="GO" id="GO:0005975">
    <property type="term" value="P:carbohydrate metabolic process"/>
    <property type="evidence" value="ECO:0007669"/>
    <property type="project" value="InterPro"/>
</dbReference>
<dbReference type="GO" id="GO:0009252">
    <property type="term" value="P:peptidoglycan biosynthetic process"/>
    <property type="evidence" value="ECO:0007669"/>
    <property type="project" value="TreeGrafter"/>
</dbReference>
<dbReference type="GO" id="GO:0006048">
    <property type="term" value="P:UDP-N-acetylglucosamine biosynthetic process"/>
    <property type="evidence" value="ECO:0007669"/>
    <property type="project" value="TreeGrafter"/>
</dbReference>
<dbReference type="CDD" id="cd05802">
    <property type="entry name" value="GlmM"/>
    <property type="match status" value="1"/>
</dbReference>
<dbReference type="FunFam" id="3.30.310.50:FF:000001">
    <property type="entry name" value="Phosphoglucosamine mutase"/>
    <property type="match status" value="1"/>
</dbReference>
<dbReference type="FunFam" id="3.40.120.10:FF:000001">
    <property type="entry name" value="Phosphoglucosamine mutase"/>
    <property type="match status" value="1"/>
</dbReference>
<dbReference type="FunFam" id="3.40.120.10:FF:000002">
    <property type="entry name" value="Phosphoglucosamine mutase"/>
    <property type="match status" value="1"/>
</dbReference>
<dbReference type="Gene3D" id="3.40.120.10">
    <property type="entry name" value="Alpha-D-Glucose-1,6-Bisphosphate, subunit A, domain 3"/>
    <property type="match status" value="3"/>
</dbReference>
<dbReference type="Gene3D" id="3.30.310.50">
    <property type="entry name" value="Alpha-D-phosphohexomutase, C-terminal domain"/>
    <property type="match status" value="1"/>
</dbReference>
<dbReference type="HAMAP" id="MF_01554_B">
    <property type="entry name" value="GlmM_B"/>
    <property type="match status" value="1"/>
</dbReference>
<dbReference type="InterPro" id="IPR005844">
    <property type="entry name" value="A-D-PHexomutase_a/b/a-I"/>
</dbReference>
<dbReference type="InterPro" id="IPR016055">
    <property type="entry name" value="A-D-PHexomutase_a/b/a-I/II/III"/>
</dbReference>
<dbReference type="InterPro" id="IPR005845">
    <property type="entry name" value="A-D-PHexomutase_a/b/a-II"/>
</dbReference>
<dbReference type="InterPro" id="IPR005846">
    <property type="entry name" value="A-D-PHexomutase_a/b/a-III"/>
</dbReference>
<dbReference type="InterPro" id="IPR005843">
    <property type="entry name" value="A-D-PHexomutase_C"/>
</dbReference>
<dbReference type="InterPro" id="IPR036900">
    <property type="entry name" value="A-D-PHexomutase_C_sf"/>
</dbReference>
<dbReference type="InterPro" id="IPR016066">
    <property type="entry name" value="A-D-PHexomutase_CS"/>
</dbReference>
<dbReference type="InterPro" id="IPR005841">
    <property type="entry name" value="Alpha-D-phosphohexomutase_SF"/>
</dbReference>
<dbReference type="InterPro" id="IPR006352">
    <property type="entry name" value="GlmM_bact"/>
</dbReference>
<dbReference type="InterPro" id="IPR050060">
    <property type="entry name" value="Phosphoglucosamine_mutase"/>
</dbReference>
<dbReference type="NCBIfam" id="TIGR01455">
    <property type="entry name" value="glmM"/>
    <property type="match status" value="1"/>
</dbReference>
<dbReference type="NCBIfam" id="NF008139">
    <property type="entry name" value="PRK10887.1"/>
    <property type="match status" value="1"/>
</dbReference>
<dbReference type="PANTHER" id="PTHR42946:SF1">
    <property type="entry name" value="PHOSPHOGLUCOMUTASE (ALPHA-D-GLUCOSE-1,6-BISPHOSPHATE-DEPENDENT)"/>
    <property type="match status" value="1"/>
</dbReference>
<dbReference type="PANTHER" id="PTHR42946">
    <property type="entry name" value="PHOSPHOHEXOSE MUTASE"/>
    <property type="match status" value="1"/>
</dbReference>
<dbReference type="Pfam" id="PF02878">
    <property type="entry name" value="PGM_PMM_I"/>
    <property type="match status" value="1"/>
</dbReference>
<dbReference type="Pfam" id="PF02879">
    <property type="entry name" value="PGM_PMM_II"/>
    <property type="match status" value="1"/>
</dbReference>
<dbReference type="Pfam" id="PF02880">
    <property type="entry name" value="PGM_PMM_III"/>
    <property type="match status" value="1"/>
</dbReference>
<dbReference type="Pfam" id="PF00408">
    <property type="entry name" value="PGM_PMM_IV"/>
    <property type="match status" value="1"/>
</dbReference>
<dbReference type="PRINTS" id="PR00509">
    <property type="entry name" value="PGMPMM"/>
</dbReference>
<dbReference type="SUPFAM" id="SSF55957">
    <property type="entry name" value="Phosphoglucomutase, C-terminal domain"/>
    <property type="match status" value="1"/>
</dbReference>
<dbReference type="SUPFAM" id="SSF53738">
    <property type="entry name" value="Phosphoglucomutase, first 3 domains"/>
    <property type="match status" value="3"/>
</dbReference>
<dbReference type="PROSITE" id="PS00710">
    <property type="entry name" value="PGM_PMM"/>
    <property type="match status" value="1"/>
</dbReference>
<evidence type="ECO:0000255" key="1">
    <source>
        <dbReference type="HAMAP-Rule" id="MF_01554"/>
    </source>
</evidence>
<organism>
    <name type="scientific">Shouchella clausii (strain KSM-K16)</name>
    <name type="common">Alkalihalobacillus clausii</name>
    <dbReference type="NCBI Taxonomy" id="66692"/>
    <lineage>
        <taxon>Bacteria</taxon>
        <taxon>Bacillati</taxon>
        <taxon>Bacillota</taxon>
        <taxon>Bacilli</taxon>
        <taxon>Bacillales</taxon>
        <taxon>Bacillaceae</taxon>
        <taxon>Shouchella</taxon>
    </lineage>
</organism>
<proteinExistence type="inferred from homology"/>
<sequence>MGKYFGTDGVRGVANSELTPELAFKLGRAGGYVLTKEAAQPKVLIGRDTRISGEMLEASLVAGLLSIGAEVMRLGVISTPGVAFLTKQLSATAGIMISASHNPVEDNGIKFFGSDGFKLLDSQEEEIEALIDGEDTMPRPIGGDVGQLNDYFEGSQKYMQFLKQTVEGGFEGIHVAIDCANGAASSLATHVLADLDADISSMGSSPNGTNINACCGSTHPEELAKLVVEKQADVGLAFDGDADRLIAVDEKGEIVDGDKIMYIIASYLKEQGRLNNNTIVTTVMSNLGFYKALEEKQIETKQTAVGDRYVMEEMRKGNYNLGGEQSGHIIFLDYNTTGDGLLTGVQLLNIMKQTGKPLSELAAGMKTFPQCLINVRVTDKDAVKNNALVQQEIKRVEEAMAGEGRILVRPSGTEPLVRVMVEAKTDELCQQYANQIVDVVKEQLGA</sequence>
<protein>
    <recommendedName>
        <fullName evidence="1">Phosphoglucosamine mutase</fullName>
        <ecNumber evidence="1">5.4.2.10</ecNumber>
    </recommendedName>
</protein>
<feature type="chain" id="PRO_0000147843" description="Phosphoglucosamine mutase">
    <location>
        <begin position="1"/>
        <end position="446"/>
    </location>
</feature>
<feature type="active site" description="Phosphoserine intermediate" evidence="1">
    <location>
        <position position="100"/>
    </location>
</feature>
<feature type="binding site" description="via phosphate group" evidence="1">
    <location>
        <position position="100"/>
    </location>
    <ligand>
        <name>Mg(2+)</name>
        <dbReference type="ChEBI" id="CHEBI:18420"/>
    </ligand>
</feature>
<feature type="binding site" evidence="1">
    <location>
        <position position="239"/>
    </location>
    <ligand>
        <name>Mg(2+)</name>
        <dbReference type="ChEBI" id="CHEBI:18420"/>
    </ligand>
</feature>
<feature type="binding site" evidence="1">
    <location>
        <position position="241"/>
    </location>
    <ligand>
        <name>Mg(2+)</name>
        <dbReference type="ChEBI" id="CHEBI:18420"/>
    </ligand>
</feature>
<feature type="binding site" evidence="1">
    <location>
        <position position="243"/>
    </location>
    <ligand>
        <name>Mg(2+)</name>
        <dbReference type="ChEBI" id="CHEBI:18420"/>
    </ligand>
</feature>
<feature type="modified residue" description="Phosphoserine" evidence="1">
    <location>
        <position position="100"/>
    </location>
</feature>
<comment type="function">
    <text evidence="1">Catalyzes the conversion of glucosamine-6-phosphate to glucosamine-1-phosphate.</text>
</comment>
<comment type="catalytic activity">
    <reaction evidence="1">
        <text>alpha-D-glucosamine 1-phosphate = D-glucosamine 6-phosphate</text>
        <dbReference type="Rhea" id="RHEA:23424"/>
        <dbReference type="ChEBI" id="CHEBI:58516"/>
        <dbReference type="ChEBI" id="CHEBI:58725"/>
        <dbReference type="EC" id="5.4.2.10"/>
    </reaction>
</comment>
<comment type="cofactor">
    <cofactor evidence="1">
        <name>Mg(2+)</name>
        <dbReference type="ChEBI" id="CHEBI:18420"/>
    </cofactor>
    <text evidence="1">Binds 1 Mg(2+) ion per subunit.</text>
</comment>
<comment type="PTM">
    <text evidence="1">Activated by phosphorylation.</text>
</comment>
<comment type="similarity">
    <text evidence="1">Belongs to the phosphohexose mutase family.</text>
</comment>
<accession>Q5WLG9</accession>
<keyword id="KW-0413">Isomerase</keyword>
<keyword id="KW-0460">Magnesium</keyword>
<keyword id="KW-0479">Metal-binding</keyword>
<keyword id="KW-0597">Phosphoprotein</keyword>
<keyword id="KW-1185">Reference proteome</keyword>
<name>GLMM_SHOC1</name>
<gene>
    <name evidence="1" type="primary">glmM</name>
    <name type="ordered locus">ABC0243</name>
</gene>
<reference key="1">
    <citation type="submission" date="2003-10" db="EMBL/GenBank/DDBJ databases">
        <title>The complete genome sequence of the alkaliphilic Bacillus clausii KSM-K16.</title>
        <authorList>
            <person name="Takaki Y."/>
            <person name="Kageyama Y."/>
            <person name="Shimamura S."/>
            <person name="Suzuki H."/>
            <person name="Nishi S."/>
            <person name="Hatada Y."/>
            <person name="Kawai S."/>
            <person name="Ito S."/>
            <person name="Horikoshi K."/>
        </authorList>
    </citation>
    <scope>NUCLEOTIDE SEQUENCE [LARGE SCALE GENOMIC DNA]</scope>
    <source>
        <strain>KSM-K16</strain>
    </source>
</reference>